<dbReference type="EMBL" id="MN450157">
    <property type="protein sequence ID" value="QJZ31624.1"/>
    <property type="molecule type" value="mRNA"/>
</dbReference>
<dbReference type="BMRB" id="A0A6M6RE84"/>
<dbReference type="SMR" id="A0A6M6RE84"/>
<dbReference type="GO" id="GO:0005576">
    <property type="term" value="C:extracellular region"/>
    <property type="evidence" value="ECO:0000314"/>
    <property type="project" value="UniProtKB"/>
</dbReference>
<keyword id="KW-0027">Amidation</keyword>
<keyword id="KW-0903">Direct protein sequencing</keyword>
<keyword id="KW-1015">Disulfide bond</keyword>
<keyword id="KW-0325">Glycoprotein</keyword>
<keyword id="KW-1199">Hemostasis impairing toxin</keyword>
<keyword id="KW-0964">Secreted</keyword>
<keyword id="KW-0732">Signal</keyword>
<keyword id="KW-0800">Toxin</keyword>
<proteinExistence type="evidence at protein level"/>
<protein>
    <recommendedName>
        <fullName evidence="5 6">U17-myrmicitoxin-Tb1a</fullName>
        <shortName evidence="5 6">U17-MYRTX-Tb1a</shortName>
    </recommendedName>
    <alternativeName>
        <fullName evidence="7">Secapin</fullName>
    </alternativeName>
</protein>
<organism evidence="9">
    <name type="scientific">Tetramorium bicarinatum</name>
    <name type="common">Tramp ant</name>
    <dbReference type="NCBI Taxonomy" id="219812"/>
    <lineage>
        <taxon>Eukaryota</taxon>
        <taxon>Metazoa</taxon>
        <taxon>Ecdysozoa</taxon>
        <taxon>Arthropoda</taxon>
        <taxon>Hexapoda</taxon>
        <taxon>Insecta</taxon>
        <taxon>Pterygota</taxon>
        <taxon>Neoptera</taxon>
        <taxon>Endopterygota</taxon>
        <taxon>Hymenoptera</taxon>
        <taxon>Apocrita</taxon>
        <taxon>Aculeata</taxon>
        <taxon>Formicoidea</taxon>
        <taxon>Formicidae</taxon>
        <taxon>Myrmicinae</taxon>
        <taxon>Tetramorium</taxon>
    </lineage>
</organism>
<feature type="signal peptide" evidence="2">
    <location>
        <begin position="1"/>
        <end position="29"/>
    </location>
</feature>
<feature type="propeptide" id="PRO_0000453047" evidence="8">
    <location>
        <begin position="30"/>
        <end position="33"/>
    </location>
</feature>
<feature type="peptide" id="PRO_0000453048" description="U17-myrmicitoxin-Tb1a" evidence="3">
    <location>
        <begin position="34"/>
        <end position="56"/>
    </location>
</feature>
<feature type="modified residue" description="Alanine amide" evidence="3">
    <location>
        <position position="56"/>
    </location>
</feature>
<feature type="disulfide bond" evidence="4">
    <location>
        <begin position="42"/>
        <end position="53"/>
    </location>
</feature>
<name>SECP_TETBN</name>
<evidence type="ECO:0000250" key="1">
    <source>
        <dbReference type="UniProtKB" id="A0A0K1YW63"/>
    </source>
</evidence>
<evidence type="ECO:0000255" key="2"/>
<evidence type="ECO:0000269" key="3">
    <source>
    </source>
</evidence>
<evidence type="ECO:0000269" key="4">
    <source>
    </source>
</evidence>
<evidence type="ECO:0000303" key="5">
    <source>
    </source>
</evidence>
<evidence type="ECO:0000303" key="6">
    <source>
    </source>
</evidence>
<evidence type="ECO:0000305" key="7"/>
<evidence type="ECO:0000305" key="8">
    <source>
    </source>
</evidence>
<evidence type="ECO:0000312" key="9">
    <source>
        <dbReference type="EMBL" id="QJZ31624.1"/>
    </source>
</evidence>
<reference evidence="9" key="1">
    <citation type="journal article" date="2018" name="J. Proteome Res.">
        <title>Deciphering the Molecular Diversity of an Ant Venom Peptidome through a Venomics Approach.</title>
        <authorList>
            <person name="Touchard A."/>
            <person name="Tene N."/>
            <person name="Song P.C.T."/>
            <person name="Lefranc B."/>
            <person name="Leprince J."/>
            <person name="Treilhou M."/>
            <person name="Bonnafe E."/>
        </authorList>
    </citation>
    <scope>NUCLEOTIDE SEQUENCE [MRNA]</scope>
    <scope>PROTEIN SEQUENCE OF 35-54</scope>
    <scope>SUBCELLULAR LOCATION</scope>
    <scope>GLYCOSYLATION</scope>
    <scope>MASS SPECTROMETRY</scope>
    <scope>AMIDATION AT ALA-56</scope>
    <source>
        <tissue>Venom gland</tissue>
    </source>
</reference>
<reference key="2">
    <citation type="journal article" date="2022" name="Insect Biochem. Mol. Biol.">
        <title>Venomics survey of six myrmicine ants provides insights into the molecular and structural diversity of their peptide toxins.</title>
        <authorList>
            <person name="Barasse V."/>
            <person name="Tene N."/>
            <person name="Klopp C."/>
            <person name="Paquet F."/>
            <person name="Tysklind N."/>
            <person name="Troispoux V."/>
            <person name="Lalaegue H."/>
            <person name="Orivel J."/>
            <person name="Lefranc B."/>
            <person name="Leprince J."/>
            <person name="Kenne M."/>
            <person name="Tindo M."/>
            <person name="Treilhou M."/>
            <person name="Touchard A."/>
            <person name="Bonnafe E."/>
        </authorList>
    </citation>
    <scope>STRUCTURE BY NMR OF 34-56</scope>
    <scope>SYNTHESIS OF 34-56</scope>
    <scope>DISULFIDE BOND</scope>
</reference>
<comment type="function">
    <text evidence="1">Serine protease inhibitor which exhibits antifibrinolytic, antielastolytic and antimicrobial activities. Displays antimicrobial activity against bacteria and fungi. Likely functions in the innate immune response to microbial infection and possibly in the venom, as an antifibrinolytic agent.</text>
</comment>
<comment type="subcellular location">
    <subcellularLocation>
        <location evidence="3">Secreted</location>
    </subcellularLocation>
</comment>
<comment type="tissue specificity">
    <text evidence="3">Expressed by the venom gland.</text>
</comment>
<comment type="PTM">
    <text evidence="3">O-glycosylated.</text>
</comment>
<comment type="mass spectrometry" mass="2670.4" method="Electrospray" evidence="3"/>
<comment type="similarity">
    <text evidence="7">Belongs to the secapin family.</text>
</comment>
<accession>A0A6M6RE84</accession>
<sequence length="57" mass="6341">MEKNRTNIFSVYLMITFLLISIFITMVMSDGEATIINAPNRCPPGHVVVKGRCRIAG</sequence>